<accession>P16121</accession>
<name>HSP70_LUPPO</name>
<feature type="chain" id="PRO_0000078349" description="Heat shock 70 kDa protein">
    <location>
        <begin position="1" status="less than"/>
        <end position="257"/>
    </location>
</feature>
<feature type="non-terminal residue">
    <location>
        <position position="1"/>
    </location>
</feature>
<keyword id="KW-0067">ATP-binding</keyword>
<keyword id="KW-0547">Nucleotide-binding</keyword>
<keyword id="KW-0346">Stress response</keyword>
<dbReference type="EMBL" id="X51765">
    <property type="protein sequence ID" value="CAA36067.1"/>
    <property type="molecule type" value="mRNA"/>
</dbReference>
<dbReference type="PIR" id="S08662">
    <property type="entry name" value="S08662"/>
</dbReference>
<dbReference type="SMR" id="P16121"/>
<dbReference type="GO" id="GO:0005524">
    <property type="term" value="F:ATP binding"/>
    <property type="evidence" value="ECO:0007669"/>
    <property type="project" value="UniProtKB-KW"/>
</dbReference>
<dbReference type="GO" id="GO:0140662">
    <property type="term" value="F:ATP-dependent protein folding chaperone"/>
    <property type="evidence" value="ECO:0007669"/>
    <property type="project" value="InterPro"/>
</dbReference>
<dbReference type="FunFam" id="2.60.34.10:FF:000002">
    <property type="entry name" value="Heat shock 70 kDa"/>
    <property type="match status" value="1"/>
</dbReference>
<dbReference type="FunFam" id="1.20.1270.10:FF:000016">
    <property type="entry name" value="Heat shock protein 70"/>
    <property type="match status" value="1"/>
</dbReference>
<dbReference type="Gene3D" id="1.20.1270.10">
    <property type="match status" value="1"/>
</dbReference>
<dbReference type="Gene3D" id="2.60.34.10">
    <property type="entry name" value="Substrate Binding Domain Of DNAk, Chain A, domain 1"/>
    <property type="match status" value="1"/>
</dbReference>
<dbReference type="InterPro" id="IPR029048">
    <property type="entry name" value="HSP70_C_sf"/>
</dbReference>
<dbReference type="InterPro" id="IPR029047">
    <property type="entry name" value="HSP70_peptide-bd_sf"/>
</dbReference>
<dbReference type="InterPro" id="IPR013126">
    <property type="entry name" value="Hsp_70_fam"/>
</dbReference>
<dbReference type="PANTHER" id="PTHR19375">
    <property type="entry name" value="HEAT SHOCK PROTEIN 70KDA"/>
    <property type="match status" value="1"/>
</dbReference>
<dbReference type="Pfam" id="PF00012">
    <property type="entry name" value="HSP70"/>
    <property type="match status" value="1"/>
</dbReference>
<dbReference type="PRINTS" id="PR00301">
    <property type="entry name" value="HEATSHOCK70"/>
</dbReference>
<dbReference type="SUPFAM" id="SSF100934">
    <property type="entry name" value="Heat shock protein 70kD (HSP70), C-terminal subdomain"/>
    <property type="match status" value="1"/>
</dbReference>
<dbReference type="SUPFAM" id="SSF100920">
    <property type="entry name" value="Heat shock protein 70kD (HSP70), peptide-binding domain"/>
    <property type="match status" value="1"/>
</dbReference>
<sequence>KVQDLLLLDVTPLSLGLETAGGVMTVLIPRNTTIPTKKEQVFSTYSDKEPGVLIQVFEGERTRTRDNNLLGKFELSGIPPAPRDVPQITVCFDIDANWCLNVSAEDKTTGQKNKITITNDKGRLSKEDIEKMVQEVEKYKAEDEEVKKKVDTKNALENYAYSMRNTITDDKITSKLPTEDKKKIEDTVDGAISRLDGNQLPEVEEFEDKMKELESLCNPIIAKMYQGVLAQMVLVLLIMADAPTGSGGAGPKIGEVD</sequence>
<reference key="1">
    <citation type="journal article" date="1991" name="J. Plant Physiol.">
        <title>Constitutive expression and molecular characterization of a cDNA clone encoding a partial HSP70 gene in cell suspension cultures of Lupinus polyphyllus.</title>
        <authorList>
            <person name="Perrey R."/>
            <person name="Wink M."/>
        </authorList>
    </citation>
    <scope>NUCLEOTIDE SEQUENCE [MRNA]</scope>
</reference>
<evidence type="ECO:0000305" key="1"/>
<protein>
    <recommendedName>
        <fullName>Heat shock 70 kDa protein</fullName>
    </recommendedName>
</protein>
<proteinExistence type="evidence at transcript level"/>
<comment type="similarity">
    <text evidence="1">Belongs to the heat shock protein 70 family.</text>
</comment>
<organism>
    <name type="scientific">Lupinus polyphyllus</name>
    <name type="common">Large-leaved lupine</name>
    <dbReference type="NCBI Taxonomy" id="3874"/>
    <lineage>
        <taxon>Eukaryota</taxon>
        <taxon>Viridiplantae</taxon>
        <taxon>Streptophyta</taxon>
        <taxon>Embryophyta</taxon>
        <taxon>Tracheophyta</taxon>
        <taxon>Spermatophyta</taxon>
        <taxon>Magnoliopsida</taxon>
        <taxon>eudicotyledons</taxon>
        <taxon>Gunneridae</taxon>
        <taxon>Pentapetalae</taxon>
        <taxon>rosids</taxon>
        <taxon>fabids</taxon>
        <taxon>Fabales</taxon>
        <taxon>Fabaceae</taxon>
        <taxon>Papilionoideae</taxon>
        <taxon>50 kb inversion clade</taxon>
        <taxon>genistoids sensu lato</taxon>
        <taxon>core genistoids</taxon>
        <taxon>Genisteae</taxon>
        <taxon>Lupinus</taxon>
    </lineage>
</organism>